<organism>
    <name type="scientific">Salmonella typhimurium (strain LT2 / SGSC1412 / ATCC 700720)</name>
    <dbReference type="NCBI Taxonomy" id="99287"/>
    <lineage>
        <taxon>Bacteria</taxon>
        <taxon>Pseudomonadati</taxon>
        <taxon>Pseudomonadota</taxon>
        <taxon>Gammaproteobacteria</taxon>
        <taxon>Enterobacterales</taxon>
        <taxon>Enterobacteriaceae</taxon>
        <taxon>Salmonella</taxon>
    </lineage>
</organism>
<dbReference type="EMBL" id="AJ315770">
    <property type="protein sequence ID" value="CAC44014.1"/>
    <property type="status" value="ALT_INIT"/>
    <property type="molecule type" value="Genomic_DNA"/>
</dbReference>
<dbReference type="EMBL" id="AE006468">
    <property type="protein sequence ID" value="AAL22480.1"/>
    <property type="molecule type" value="Genomic_DNA"/>
</dbReference>
<dbReference type="RefSeq" id="WP_000996125.1">
    <property type="nucleotide sequence ID" value="NC_003197.2"/>
</dbReference>
<dbReference type="SMR" id="Q8ZLB6"/>
<dbReference type="STRING" id="99287.STM3620"/>
<dbReference type="PaxDb" id="99287-STM3620"/>
<dbReference type="KEGG" id="stm:STM3620"/>
<dbReference type="PATRIC" id="fig|99287.12.peg.3826"/>
<dbReference type="HOGENOM" id="CLU_037612_7_1_6"/>
<dbReference type="OMA" id="VVHRDEA"/>
<dbReference type="PhylomeDB" id="Q8ZLB6"/>
<dbReference type="BioCyc" id="SENT99287:STM3620-MONOMER"/>
<dbReference type="Proteomes" id="UP000001014">
    <property type="component" value="Chromosome"/>
</dbReference>
<dbReference type="GO" id="GO:0009898">
    <property type="term" value="C:cytoplasmic side of plasma membrane"/>
    <property type="evidence" value="ECO:0000318"/>
    <property type="project" value="GO_Central"/>
</dbReference>
<dbReference type="GO" id="GO:0005829">
    <property type="term" value="C:cytosol"/>
    <property type="evidence" value="ECO:0000318"/>
    <property type="project" value="GO_Central"/>
</dbReference>
<dbReference type="GO" id="GO:0005524">
    <property type="term" value="F:ATP binding"/>
    <property type="evidence" value="ECO:0000318"/>
    <property type="project" value="GO_Central"/>
</dbReference>
<dbReference type="GO" id="GO:0016887">
    <property type="term" value="F:ATP hydrolysis activity"/>
    <property type="evidence" value="ECO:0000318"/>
    <property type="project" value="GO_Central"/>
</dbReference>
<dbReference type="FunFam" id="3.40.50.300:FF:000943">
    <property type="entry name" value="Cellulose synthase operon protein YhjQ"/>
    <property type="match status" value="1"/>
</dbReference>
<dbReference type="Gene3D" id="3.40.50.300">
    <property type="entry name" value="P-loop containing nucleotide triphosphate hydrolases"/>
    <property type="match status" value="1"/>
</dbReference>
<dbReference type="InterPro" id="IPR017746">
    <property type="entry name" value="Cellulose_synthase_operon_BcsQ"/>
</dbReference>
<dbReference type="InterPro" id="IPR027417">
    <property type="entry name" value="P-loop_NTPase"/>
</dbReference>
<dbReference type="InterPro" id="IPR050625">
    <property type="entry name" value="ParA/MinD_ATPase"/>
</dbReference>
<dbReference type="NCBIfam" id="TIGR03371">
    <property type="entry name" value="cellulose_yhjQ"/>
    <property type="match status" value="1"/>
</dbReference>
<dbReference type="NCBIfam" id="NF007460">
    <property type="entry name" value="PRK10037.1"/>
    <property type="match status" value="1"/>
</dbReference>
<dbReference type="PANTHER" id="PTHR43384:SF4">
    <property type="entry name" value="CELLULOSE BIOSYNTHESIS PROTEIN BCSQ-RELATED"/>
    <property type="match status" value="1"/>
</dbReference>
<dbReference type="PANTHER" id="PTHR43384">
    <property type="entry name" value="SEPTUM SITE-DETERMINING PROTEIN MIND HOMOLOG, CHLOROPLASTIC-RELATED"/>
    <property type="match status" value="1"/>
</dbReference>
<dbReference type="Pfam" id="PF06564">
    <property type="entry name" value="CBP_BcsQ"/>
    <property type="match status" value="1"/>
</dbReference>
<dbReference type="SUPFAM" id="SSF52540">
    <property type="entry name" value="P-loop containing nucleoside triphosphate hydrolases"/>
    <property type="match status" value="1"/>
</dbReference>
<keyword id="KW-0067">ATP-binding</keyword>
<keyword id="KW-0963">Cytoplasm</keyword>
<keyword id="KW-0547">Nucleotide-binding</keyword>
<keyword id="KW-1185">Reference proteome</keyword>
<accession>Q8ZLB6</accession>
<accession>Q93IN3</accession>
<feature type="chain" id="PRO_0000169577" description="Cellulose biosynthesis protein BcsQ">
    <location>
        <begin position="1"/>
        <end position="250"/>
    </location>
</feature>
<feature type="binding site" evidence="2">
    <location>
        <begin position="9"/>
        <end position="16"/>
    </location>
    <ligand>
        <name>ATP</name>
        <dbReference type="ChEBI" id="CHEBI:30616"/>
    </ligand>
</feature>
<reference key="1">
    <citation type="journal article" date="2001" name="Mol. Microbiol.">
        <title>The multicellular morphotypes of Salmonella typhimurium and Escherichia coli produce cellulose as the second component of the extracellular matrix.</title>
        <authorList>
            <person name="Zogaj X."/>
            <person name="Nimtz M."/>
            <person name="Rohde M."/>
            <person name="Bokranz W."/>
            <person name="Roemling U."/>
        </authorList>
    </citation>
    <scope>NUCLEOTIDE SEQUENCE [GENOMIC DNA]</scope>
    <source>
        <strain>ATCC 14028 / SGSG 2980 / CDC 6516-60 / NCTC 12023</strain>
    </source>
</reference>
<reference key="2">
    <citation type="journal article" date="2001" name="Nature">
        <title>Complete genome sequence of Salmonella enterica serovar Typhimurium LT2.</title>
        <authorList>
            <person name="McClelland M."/>
            <person name="Sanderson K.E."/>
            <person name="Spieth J."/>
            <person name="Clifton S.W."/>
            <person name="Latreille P."/>
            <person name="Courtney L."/>
            <person name="Porwollik S."/>
            <person name="Ali J."/>
            <person name="Dante M."/>
            <person name="Du F."/>
            <person name="Hou S."/>
            <person name="Layman D."/>
            <person name="Leonard S."/>
            <person name="Nguyen C."/>
            <person name="Scott K."/>
            <person name="Holmes A."/>
            <person name="Grewal N."/>
            <person name="Mulvaney E."/>
            <person name="Ryan E."/>
            <person name="Sun H."/>
            <person name="Florea L."/>
            <person name="Miller W."/>
            <person name="Stoneking T."/>
            <person name="Nhan M."/>
            <person name="Waterston R."/>
            <person name="Wilson R.K."/>
        </authorList>
    </citation>
    <scope>NUCLEOTIDE SEQUENCE [LARGE SCALE GENOMIC DNA]</scope>
    <source>
        <strain>LT2 / SGSC1412 / ATCC 700720</strain>
    </source>
</reference>
<comment type="function">
    <text evidence="1">Essential for cellulose biosynthesis. May play a role in subcellular localization of an active cellulose biosynthesis apparatus at the bacterial cell pole (By similarity).</text>
</comment>
<comment type="subcellular location">
    <subcellularLocation>
        <location evidence="1">Cytoplasm</location>
    </subcellularLocation>
    <text evidence="1">Localizes at the cell pole.</text>
</comment>
<comment type="similarity">
    <text evidence="3">Belongs to the BcsQ family.</text>
</comment>
<comment type="sequence caution" evidence="3">
    <conflict type="erroneous initiation">
        <sequence resource="EMBL-CDS" id="CAC44014"/>
    </conflict>
    <text>Truncated N-terminus.</text>
</comment>
<gene>
    <name type="primary">bcsQ</name>
    <name type="ordered locus">STM3620</name>
</gene>
<evidence type="ECO:0000250" key="1"/>
<evidence type="ECO:0000255" key="2"/>
<evidence type="ECO:0000305" key="3"/>
<name>BCSQ_SALTY</name>
<proteinExistence type="inferred from homology"/>
<protein>
    <recommendedName>
        <fullName>Cellulose biosynthesis protein BcsQ</fullName>
    </recommendedName>
</protein>
<sequence>MAILGLQGVRGGVGTTSLTAALAWALQILGENVLVIDASPDNLLRMSFNVDFVHQGGWARSLLDGQDWRDAGLRYTSQLDLLPFGQLTAQERENPQSWQETLGEIGSAIQALKASGRYSWILLDLPYGASPLTRQLVSLCDHTLAIARVDANCHIRLHQQALPAGAHILINDLRIGSQLQDDLYQVWLQSQRRLLPIVIHRDEAMAECMASKQPLGEYRSDSLAAEEVLTLANWCLLHDAGDKTSAGSLR</sequence>